<proteinExistence type="evidence at protein level"/>
<dbReference type="EC" id="5.3.3.-" evidence="2"/>
<dbReference type="EMBL" id="AE014299">
    <property type="protein sequence ID" value="AAN53427.1"/>
    <property type="molecule type" value="Genomic_DNA"/>
</dbReference>
<dbReference type="RefSeq" id="NP_715982.1">
    <property type="nucleotide sequence ID" value="NC_004347.2"/>
</dbReference>
<dbReference type="RefSeq" id="WP_011070707.1">
    <property type="nucleotide sequence ID" value="NC_004347.2"/>
</dbReference>
<dbReference type="PDB" id="2PVZ">
    <property type="method" value="X-ray"/>
    <property type="resolution" value="1.97 A"/>
    <property type="chains" value="A/B=1-397"/>
</dbReference>
<dbReference type="PDB" id="2PW0">
    <property type="method" value="X-ray"/>
    <property type="resolution" value="1.57 A"/>
    <property type="chains" value="A/B=1-397"/>
</dbReference>
<dbReference type="PDB" id="5K87">
    <property type="method" value="X-ray"/>
    <property type="resolution" value="1.22 A"/>
    <property type="chains" value="A/B=2-397"/>
</dbReference>
<dbReference type="PDBsum" id="2PVZ"/>
<dbReference type="PDBsum" id="2PW0"/>
<dbReference type="PDBsum" id="5K87"/>
<dbReference type="SMR" id="Q8EJW4"/>
<dbReference type="STRING" id="211586.SO_0342"/>
<dbReference type="PaxDb" id="211586-SO_0342"/>
<dbReference type="KEGG" id="son:SO_0342"/>
<dbReference type="PATRIC" id="fig|211586.12.peg.332"/>
<dbReference type="eggNOG" id="COG2828">
    <property type="taxonomic scope" value="Bacteria"/>
</dbReference>
<dbReference type="HOGENOM" id="CLU_026443_2_0_6"/>
<dbReference type="OrthoDB" id="9779763at2"/>
<dbReference type="PhylomeDB" id="Q8EJW4"/>
<dbReference type="BioCyc" id="SONE211586:G1GMP-327-MONOMER"/>
<dbReference type="BRENDA" id="5.2.1.B4">
    <property type="organism ID" value="5706"/>
</dbReference>
<dbReference type="BRENDA" id="5.3.3.7">
    <property type="organism ID" value="5706"/>
</dbReference>
<dbReference type="UniPathway" id="UPA00946"/>
<dbReference type="EvolutionaryTrace" id="Q8EJW4"/>
<dbReference type="Proteomes" id="UP000008186">
    <property type="component" value="Chromosome"/>
</dbReference>
<dbReference type="GO" id="GO:0016863">
    <property type="term" value="F:intramolecular oxidoreductase activity, transposing C=C bonds"/>
    <property type="evidence" value="ECO:0000314"/>
    <property type="project" value="UniProtKB"/>
</dbReference>
<dbReference type="GO" id="GO:0019629">
    <property type="term" value="P:propionate catabolic process, 2-methylcitrate cycle"/>
    <property type="evidence" value="ECO:0000314"/>
    <property type="project" value="UniProtKB"/>
</dbReference>
<dbReference type="FunFam" id="3.10.310.10:FF:000038">
    <property type="entry name" value="2-methyl-aconitate isomerase"/>
    <property type="match status" value="1"/>
</dbReference>
<dbReference type="FunFam" id="3.10.310.10:FF:000018">
    <property type="entry name" value="2-methylaconitate cis-trans isomerase"/>
    <property type="match status" value="1"/>
</dbReference>
<dbReference type="Gene3D" id="3.10.310.10">
    <property type="entry name" value="Diaminopimelate Epimerase, Chain A, domain 1"/>
    <property type="match status" value="2"/>
</dbReference>
<dbReference type="InterPro" id="IPR012709">
    <property type="entry name" value="PrpF"/>
</dbReference>
<dbReference type="InterPro" id="IPR007400">
    <property type="entry name" value="PrpF-like"/>
</dbReference>
<dbReference type="NCBIfam" id="TIGR02334">
    <property type="entry name" value="prpF"/>
    <property type="match status" value="1"/>
</dbReference>
<dbReference type="PANTHER" id="PTHR43709">
    <property type="entry name" value="ACONITATE ISOMERASE-RELATED"/>
    <property type="match status" value="1"/>
</dbReference>
<dbReference type="PANTHER" id="PTHR43709:SF2">
    <property type="entry name" value="DUF453 DOMAIN PROTEIN (AFU_ORTHOLOGUE AFUA_6G00360)"/>
    <property type="match status" value="1"/>
</dbReference>
<dbReference type="Pfam" id="PF04303">
    <property type="entry name" value="PrpF"/>
    <property type="match status" value="1"/>
</dbReference>
<dbReference type="SUPFAM" id="SSF54506">
    <property type="entry name" value="Diaminopimelate epimerase-like"/>
    <property type="match status" value="2"/>
</dbReference>
<feature type="chain" id="PRO_0000432936" description="2-methyl-aconitate isomerase">
    <location>
        <begin position="1"/>
        <end position="397"/>
    </location>
</feature>
<feature type="active site" description="Proton donor/acceptor" evidence="6">
    <location>
        <position position="107"/>
    </location>
</feature>
<feature type="active site" description="Proton donor/acceptor" evidence="6">
    <location>
        <position position="321"/>
    </location>
</feature>
<feature type="binding site" evidence="2">
    <location>
        <position position="22"/>
    </location>
    <ligand>
        <name>substrate</name>
    </ligand>
</feature>
<feature type="binding site" evidence="2">
    <location>
        <begin position="69"/>
        <end position="73"/>
    </location>
    <ligand>
        <name>substrate</name>
    </ligand>
</feature>
<feature type="binding site" evidence="2">
    <location>
        <position position="109"/>
    </location>
    <ligand>
        <name>substrate</name>
    </ligand>
</feature>
<feature type="binding site" evidence="2">
    <location>
        <position position="281"/>
    </location>
    <ligand>
        <name>substrate</name>
    </ligand>
</feature>
<feature type="binding site" evidence="2">
    <location>
        <position position="312"/>
    </location>
    <ligand>
        <name>substrate</name>
    </ligand>
</feature>
<feature type="binding site" evidence="2">
    <location>
        <position position="317"/>
    </location>
    <ligand>
        <name>substrate</name>
    </ligand>
</feature>
<feature type="binding site" evidence="2">
    <location>
        <position position="322"/>
    </location>
    <ligand>
        <name>substrate</name>
    </ligand>
</feature>
<feature type="modified residue" description="Cysteine sulfinic acid (-SO2H)" evidence="2">
    <location>
        <position position="107"/>
    </location>
</feature>
<feature type="strand" evidence="8">
    <location>
        <begin position="10"/>
        <end position="19"/>
    </location>
</feature>
<feature type="strand" evidence="8">
    <location>
        <begin position="22"/>
        <end position="28"/>
    </location>
</feature>
<feature type="helix" evidence="8">
    <location>
        <begin position="29"/>
        <end position="31"/>
    </location>
</feature>
<feature type="helix" evidence="8">
    <location>
        <begin position="34"/>
        <end position="37"/>
    </location>
</feature>
<feature type="strand" evidence="8">
    <location>
        <begin position="38"/>
        <end position="40"/>
    </location>
</feature>
<feature type="helix" evidence="8">
    <location>
        <begin position="41"/>
        <end position="51"/>
    </location>
</feature>
<feature type="helix" evidence="8">
    <location>
        <begin position="69"/>
        <end position="71"/>
    </location>
</feature>
<feature type="strand" evidence="8">
    <location>
        <begin position="72"/>
        <end position="79"/>
    </location>
</feature>
<feature type="strand" evidence="8">
    <location>
        <begin position="86"/>
        <end position="94"/>
    </location>
</feature>
<feature type="strand" evidence="8">
    <location>
        <begin position="96"/>
        <end position="99"/>
    </location>
</feature>
<feature type="turn" evidence="7">
    <location>
        <begin position="108"/>
        <end position="110"/>
    </location>
</feature>
<feature type="helix" evidence="8">
    <location>
        <begin position="111"/>
        <end position="120"/>
    </location>
</feature>
<feature type="helix" evidence="8">
    <location>
        <begin position="126"/>
        <end position="128"/>
    </location>
</feature>
<feature type="strand" evidence="8">
    <location>
        <begin position="131"/>
        <end position="141"/>
    </location>
</feature>
<feature type="turn" evidence="8">
    <location>
        <begin position="142"/>
        <end position="145"/>
    </location>
</feature>
<feature type="strand" evidence="8">
    <location>
        <begin position="146"/>
        <end position="155"/>
    </location>
</feature>
<feature type="strand" evidence="8">
    <location>
        <begin position="177"/>
        <end position="183"/>
    </location>
</feature>
<feature type="strand" evidence="8">
    <location>
        <begin position="194"/>
        <end position="196"/>
    </location>
</feature>
<feature type="strand" evidence="8">
    <location>
        <begin position="201"/>
        <end position="207"/>
    </location>
</feature>
<feature type="turn" evidence="8">
    <location>
        <begin position="208"/>
        <end position="210"/>
    </location>
</feature>
<feature type="strand" evidence="8">
    <location>
        <begin position="211"/>
        <end position="228"/>
    </location>
</feature>
<feature type="helix" evidence="8">
    <location>
        <begin position="229"/>
        <end position="232"/>
    </location>
</feature>
<feature type="helix" evidence="8">
    <location>
        <begin position="240"/>
        <end position="243"/>
    </location>
</feature>
<feature type="helix" evidence="8">
    <location>
        <begin position="247"/>
        <end position="263"/>
    </location>
</feature>
<feature type="helix" evidence="8">
    <location>
        <begin position="270"/>
        <end position="274"/>
    </location>
</feature>
<feature type="strand" evidence="8">
    <location>
        <begin position="278"/>
        <end position="287"/>
    </location>
</feature>
<feature type="helix" evidence="8">
    <location>
        <begin position="301"/>
        <end position="303"/>
    </location>
</feature>
<feature type="strand" evidence="8">
    <location>
        <begin position="305"/>
        <end position="312"/>
    </location>
</feature>
<feature type="helix" evidence="8">
    <location>
        <begin position="322"/>
        <end position="332"/>
    </location>
</feature>
<feature type="helix" evidence="8">
    <location>
        <begin position="338"/>
        <end position="342"/>
    </location>
</feature>
<feature type="strand" evidence="8">
    <location>
        <begin position="349"/>
        <end position="355"/>
    </location>
</feature>
<feature type="strand" evidence="8">
    <location>
        <begin position="358"/>
        <end position="369"/>
    </location>
</feature>
<feature type="strand" evidence="8">
    <location>
        <begin position="372"/>
        <end position="382"/>
    </location>
</feature>
<feature type="strand" evidence="8">
    <location>
        <begin position="384"/>
        <end position="394"/>
    </location>
</feature>
<gene>
    <name type="primary">prpF</name>
    <name type="ordered locus">SO_0342</name>
</gene>
<comment type="function">
    <text evidence="1 2">Involved in the catabolism of short chain fatty acids (SCFA) via the 2-methylcitrate cycle II (propionate degradation route). PrpF catalyzes the cis-trans isomerization of 2-methyl-aconitate through a base-catalyzed proton abstraction coupled with a rotation about C2-C3 bond of 2-methyl-aconitate.</text>
</comment>
<comment type="catalytic activity">
    <reaction evidence="2">
        <text>2-methyl-trans-aconitate = 2-methyl-cis-aconitate</text>
        <dbReference type="Rhea" id="RHEA:37751"/>
        <dbReference type="ChEBI" id="CHEBI:57872"/>
        <dbReference type="ChEBI" id="CHEBI:58915"/>
    </reaction>
</comment>
<comment type="pathway">
    <text evidence="5">Organic acid metabolism; propanoate degradation.</text>
</comment>
<comment type="subunit">
    <text evidence="2">Homodimer.</text>
</comment>
<comment type="miscellaneous">
    <text evidence="1">Together with AcnD, they are able to restore the growth of prpD mutant on propionate.</text>
</comment>
<comment type="similarity">
    <text evidence="4">Belongs to the PrpF family.</text>
</comment>
<accession>Q8EJW4</accession>
<name>PRPF_SHEON</name>
<protein>
    <recommendedName>
        <fullName evidence="3">2-methyl-aconitate isomerase</fullName>
        <ecNumber evidence="2">5.3.3.-</ecNumber>
    </recommendedName>
    <alternativeName>
        <fullName evidence="3">Cis-trans isomerase</fullName>
    </alternativeName>
</protein>
<organism>
    <name type="scientific">Shewanella oneidensis (strain ATCC 700550 / JCM 31522 / CIP 106686 / LMG 19005 / NCIMB 14063 / MR-1)</name>
    <dbReference type="NCBI Taxonomy" id="211586"/>
    <lineage>
        <taxon>Bacteria</taxon>
        <taxon>Pseudomonadati</taxon>
        <taxon>Pseudomonadota</taxon>
        <taxon>Gammaproteobacteria</taxon>
        <taxon>Alteromonadales</taxon>
        <taxon>Shewanellaceae</taxon>
        <taxon>Shewanella</taxon>
    </lineage>
</organism>
<sequence>MSNKLFPPQIKVAATYMRGGTSKGVFFRLQDLPEAAQVPGPARDALLLRVIGSPDPYAKQIDGMGGATSSTSKTVILSHSSKANHDVDYLFGQVSIDKPFVDWSGNCGNLTAAVGAFAISNGLIDAARIPRNGVCTVRIWQANIGKTIIAHVPITDGAVQETGDFELDGVTFPAAEVQIEFMNPAADDDGEGGCMFPTGNLVDVLEVPGIGRFNATMINAGIPTIFINAEDLGYTGTELQDDINSDNAALAKFETIRAHGALRMGLIKHIDEAASRQHTPKIAFVAPPKSYASSSGKTVAAEDVDLLVRALSMGKLHHAMMGTAAVAIGTAAAIPGTLVNLAAGGGEKEAVRFGHPSGTLRVGAQAVQENGEWTVIKAIMSRSARVLMEGFVRVPKP</sequence>
<keyword id="KW-0002">3D-structure</keyword>
<keyword id="KW-0413">Isomerase</keyword>
<keyword id="KW-0558">Oxidation</keyword>
<keyword id="KW-1185">Reference proteome</keyword>
<evidence type="ECO:0000269" key="1">
    <source>
    </source>
</evidence>
<evidence type="ECO:0000269" key="2">
    <source>
    </source>
</evidence>
<evidence type="ECO:0000303" key="3">
    <source>
    </source>
</evidence>
<evidence type="ECO:0000305" key="4"/>
<evidence type="ECO:0000305" key="5">
    <source>
    </source>
</evidence>
<evidence type="ECO:0000305" key="6">
    <source>
    </source>
</evidence>
<evidence type="ECO:0007829" key="7">
    <source>
        <dbReference type="PDB" id="2PW0"/>
    </source>
</evidence>
<evidence type="ECO:0007829" key="8">
    <source>
        <dbReference type="PDB" id="5K87"/>
    </source>
</evidence>
<reference key="1">
    <citation type="journal article" date="2002" name="Nat. Biotechnol.">
        <title>Genome sequence of the dissimilatory metal ion-reducing bacterium Shewanella oneidensis.</title>
        <authorList>
            <person name="Heidelberg J.F."/>
            <person name="Paulsen I.T."/>
            <person name="Nelson K.E."/>
            <person name="Gaidos E.J."/>
            <person name="Nelson W.C."/>
            <person name="Read T.D."/>
            <person name="Eisen J.A."/>
            <person name="Seshadri R."/>
            <person name="Ward N.L."/>
            <person name="Methe B.A."/>
            <person name="Clayton R.A."/>
            <person name="Meyer T."/>
            <person name="Tsapin A."/>
            <person name="Scott J."/>
            <person name="Beanan M.J."/>
            <person name="Brinkac L.M."/>
            <person name="Daugherty S.C."/>
            <person name="DeBoy R.T."/>
            <person name="Dodson R.J."/>
            <person name="Durkin A.S."/>
            <person name="Haft D.H."/>
            <person name="Kolonay J.F."/>
            <person name="Madupu R."/>
            <person name="Peterson J.D."/>
            <person name="Umayam L.A."/>
            <person name="White O."/>
            <person name="Wolf A.M."/>
            <person name="Vamathevan J.J."/>
            <person name="Weidman J.F."/>
            <person name="Impraim M."/>
            <person name="Lee K."/>
            <person name="Berry K.J."/>
            <person name="Lee C."/>
            <person name="Mueller J."/>
            <person name="Khouri H.M."/>
            <person name="Gill J."/>
            <person name="Utterback T.R."/>
            <person name="McDonald L.A."/>
            <person name="Feldblyum T.V."/>
            <person name="Smith H.O."/>
            <person name="Venter J.C."/>
            <person name="Nealson K.H."/>
            <person name="Fraser C.M."/>
        </authorList>
    </citation>
    <scope>NUCLEOTIDE SEQUENCE [LARGE SCALE GENOMIC DNA]</scope>
    <source>
        <strain>ATCC 700550 / JCM 31522 / CIP 106686 / LMG 19005 / NCIMB 14063 / MR-1</strain>
    </source>
</reference>
<reference key="2">
    <citation type="journal article" date="2004" name="J. Bacteriol.">
        <title>The acnD genes of Shewenella oneidensis and Vibrio cholerae encode a new Fe/S-dependent 2-methylcitrate dehydratase enzyme that requires prpF function in vivo.</title>
        <authorList>
            <person name="Grimek T.L."/>
            <person name="Escalante-Semerena J.C."/>
        </authorList>
    </citation>
    <scope>FUNCTION</scope>
    <source>
        <strain>ATCC 700550 / JCM 31522 / CIP 106686 / LMG 19005 / NCIMB 14063 / MR-1</strain>
    </source>
</reference>
<reference key="3">
    <citation type="journal article" date="2007" name="Protein Sci.">
        <title>The three-dimensional crystal structure of the PrpF protein of Shewanella oneidensis complexed with trans-aconitate: insights into its biological function.</title>
        <authorList>
            <person name="Garvey G.S."/>
            <person name="Rocco C.J."/>
            <person name="Escalante-Semerena J.C."/>
            <person name="Rayment I."/>
        </authorList>
    </citation>
    <scope>X-RAY CRYSTALLOGRAPHY (1.57 ANGSTROMS) IN COMPLEX WITH SUBSTRATE ANALOG</scope>
    <scope>FUNCTION</scope>
    <scope>CATALYTIC ACTIVITY</scope>
    <scope>OXIDATION AT CYS-107</scope>
    <scope>SUBUNIT</scope>
    <scope>REACTION MECHANISM</scope>
    <source>
        <strain>ATCC 700550 / JCM 31522 / CIP 106686 / LMG 19005 / NCIMB 14063 / MR-1</strain>
    </source>
</reference>